<feature type="chain" id="PRO_1000184385" description="ATP synthase subunit c">
    <location>
        <begin position="1"/>
        <end position="84"/>
    </location>
</feature>
<feature type="transmembrane region" description="Helical" evidence="1">
    <location>
        <begin position="9"/>
        <end position="29"/>
    </location>
</feature>
<feature type="transmembrane region" description="Helical" evidence="1">
    <location>
        <begin position="54"/>
        <end position="74"/>
    </location>
</feature>
<feature type="site" description="Reversibly protonated during proton transport" evidence="1">
    <location>
        <position position="60"/>
    </location>
</feature>
<name>ATPL_HAEI8</name>
<evidence type="ECO:0000255" key="1">
    <source>
        <dbReference type="HAMAP-Rule" id="MF_01396"/>
    </source>
</evidence>
<gene>
    <name evidence="1" type="primary">atpE</name>
    <name type="ordered locus">NTHI0614</name>
</gene>
<proteinExistence type="inferred from homology"/>
<comment type="function">
    <text evidence="1">F(1)F(0) ATP synthase produces ATP from ADP in the presence of a proton or sodium gradient. F-type ATPases consist of two structural domains, F(1) containing the extramembraneous catalytic core and F(0) containing the membrane proton channel, linked together by a central stalk and a peripheral stalk. During catalysis, ATP synthesis in the catalytic domain of F(1) is coupled via a rotary mechanism of the central stalk subunits to proton translocation.</text>
</comment>
<comment type="function">
    <text evidence="1">Key component of the F(0) channel; it plays a direct role in translocation across the membrane. A homomeric c-ring of between 10-14 subunits forms the central stalk rotor element with the F(1) delta and epsilon subunits.</text>
</comment>
<comment type="subunit">
    <text evidence="1">F-type ATPases have 2 components, F(1) - the catalytic core - and F(0) - the membrane proton channel. F(1) has five subunits: alpha(3), beta(3), gamma(1), delta(1), epsilon(1). F(0) has three main subunits: a(1), b(2) and c(10-14). The alpha and beta chains form an alternating ring which encloses part of the gamma chain. F(1) is attached to F(0) by a central stalk formed by the gamma and epsilon chains, while a peripheral stalk is formed by the delta and b chains.</text>
</comment>
<comment type="subcellular location">
    <subcellularLocation>
        <location evidence="1">Cell inner membrane</location>
        <topology evidence="1">Multi-pass membrane protein</topology>
    </subcellularLocation>
</comment>
<comment type="similarity">
    <text evidence="1">Belongs to the ATPase C chain family.</text>
</comment>
<sequence length="84" mass="8641">METVITATIIGASILLAFAALGTAIGFAILGGKFLESSARQPELASSLQTKMFIVAGLLDAIAMIAVGISLLFIFANPFIGLLN</sequence>
<organism>
    <name type="scientific">Haemophilus influenzae (strain 86-028NP)</name>
    <dbReference type="NCBI Taxonomy" id="281310"/>
    <lineage>
        <taxon>Bacteria</taxon>
        <taxon>Pseudomonadati</taxon>
        <taxon>Pseudomonadota</taxon>
        <taxon>Gammaproteobacteria</taxon>
        <taxon>Pasteurellales</taxon>
        <taxon>Pasteurellaceae</taxon>
        <taxon>Haemophilus</taxon>
    </lineage>
</organism>
<reference key="1">
    <citation type="journal article" date="2005" name="J. Bacteriol.">
        <title>Genomic sequence of an otitis media isolate of nontypeable Haemophilus influenzae: comparative study with H. influenzae serotype d, strain KW20.</title>
        <authorList>
            <person name="Harrison A."/>
            <person name="Dyer D.W."/>
            <person name="Gillaspy A."/>
            <person name="Ray W.C."/>
            <person name="Mungur R."/>
            <person name="Carson M.B."/>
            <person name="Zhong H."/>
            <person name="Gipson J."/>
            <person name="Gipson M."/>
            <person name="Johnson L.S."/>
            <person name="Lewis L."/>
            <person name="Bakaletz L.O."/>
            <person name="Munson R.S. Jr."/>
        </authorList>
    </citation>
    <scope>NUCLEOTIDE SEQUENCE [LARGE SCALE GENOMIC DNA]</scope>
    <source>
        <strain>86-028NP</strain>
    </source>
</reference>
<accession>Q4QN59</accession>
<keyword id="KW-0066">ATP synthesis</keyword>
<keyword id="KW-0997">Cell inner membrane</keyword>
<keyword id="KW-1003">Cell membrane</keyword>
<keyword id="KW-0138">CF(0)</keyword>
<keyword id="KW-0375">Hydrogen ion transport</keyword>
<keyword id="KW-0406">Ion transport</keyword>
<keyword id="KW-0446">Lipid-binding</keyword>
<keyword id="KW-0472">Membrane</keyword>
<keyword id="KW-0812">Transmembrane</keyword>
<keyword id="KW-1133">Transmembrane helix</keyword>
<keyword id="KW-0813">Transport</keyword>
<protein>
    <recommendedName>
        <fullName evidence="1">ATP synthase subunit c</fullName>
    </recommendedName>
    <alternativeName>
        <fullName evidence="1">ATP synthase F(0) sector subunit c</fullName>
    </alternativeName>
    <alternativeName>
        <fullName evidence="1">F-type ATPase subunit c</fullName>
        <shortName evidence="1">F-ATPase subunit c</shortName>
    </alternativeName>
    <alternativeName>
        <fullName evidence="1">Lipid-binding protein</fullName>
    </alternativeName>
</protein>
<dbReference type="EMBL" id="CP000057">
    <property type="protein sequence ID" value="AAX87538.1"/>
    <property type="molecule type" value="Genomic_DNA"/>
</dbReference>
<dbReference type="RefSeq" id="WP_005652035.1">
    <property type="nucleotide sequence ID" value="NC_007146.2"/>
</dbReference>
<dbReference type="SMR" id="Q4QN59"/>
<dbReference type="GeneID" id="93219497"/>
<dbReference type="KEGG" id="hit:NTHI0614"/>
<dbReference type="HOGENOM" id="CLU_148047_1_0_6"/>
<dbReference type="Proteomes" id="UP000002525">
    <property type="component" value="Chromosome"/>
</dbReference>
<dbReference type="GO" id="GO:0005886">
    <property type="term" value="C:plasma membrane"/>
    <property type="evidence" value="ECO:0007669"/>
    <property type="project" value="UniProtKB-SubCell"/>
</dbReference>
<dbReference type="GO" id="GO:0045259">
    <property type="term" value="C:proton-transporting ATP synthase complex"/>
    <property type="evidence" value="ECO:0007669"/>
    <property type="project" value="UniProtKB-KW"/>
</dbReference>
<dbReference type="GO" id="GO:0033177">
    <property type="term" value="C:proton-transporting two-sector ATPase complex, proton-transporting domain"/>
    <property type="evidence" value="ECO:0007669"/>
    <property type="project" value="InterPro"/>
</dbReference>
<dbReference type="GO" id="GO:0008289">
    <property type="term" value="F:lipid binding"/>
    <property type="evidence" value="ECO:0007669"/>
    <property type="project" value="UniProtKB-KW"/>
</dbReference>
<dbReference type="GO" id="GO:0046933">
    <property type="term" value="F:proton-transporting ATP synthase activity, rotational mechanism"/>
    <property type="evidence" value="ECO:0007669"/>
    <property type="project" value="UniProtKB-UniRule"/>
</dbReference>
<dbReference type="CDD" id="cd18185">
    <property type="entry name" value="ATP-synt_Fo_c_ATPE"/>
    <property type="match status" value="1"/>
</dbReference>
<dbReference type="FunFam" id="1.20.20.10:FF:000002">
    <property type="entry name" value="ATP synthase subunit c"/>
    <property type="match status" value="1"/>
</dbReference>
<dbReference type="Gene3D" id="1.20.20.10">
    <property type="entry name" value="F1F0 ATP synthase subunit C"/>
    <property type="match status" value="1"/>
</dbReference>
<dbReference type="HAMAP" id="MF_01396">
    <property type="entry name" value="ATP_synth_c_bact"/>
    <property type="match status" value="1"/>
</dbReference>
<dbReference type="InterPro" id="IPR005953">
    <property type="entry name" value="ATP_synth_csu_bac/chlpt"/>
</dbReference>
<dbReference type="InterPro" id="IPR000454">
    <property type="entry name" value="ATP_synth_F0_csu"/>
</dbReference>
<dbReference type="InterPro" id="IPR020537">
    <property type="entry name" value="ATP_synth_F0_csu_DDCD_BS"/>
</dbReference>
<dbReference type="InterPro" id="IPR038662">
    <property type="entry name" value="ATP_synth_F0_csu_sf"/>
</dbReference>
<dbReference type="InterPro" id="IPR002379">
    <property type="entry name" value="ATPase_proteolipid_c-like_dom"/>
</dbReference>
<dbReference type="InterPro" id="IPR035921">
    <property type="entry name" value="F/V-ATP_Csub_sf"/>
</dbReference>
<dbReference type="NCBIfam" id="TIGR01260">
    <property type="entry name" value="ATP_synt_c"/>
    <property type="match status" value="1"/>
</dbReference>
<dbReference type="NCBIfam" id="NF005363">
    <property type="entry name" value="PRK06876.1"/>
    <property type="match status" value="1"/>
</dbReference>
<dbReference type="Pfam" id="PF00137">
    <property type="entry name" value="ATP-synt_C"/>
    <property type="match status" value="1"/>
</dbReference>
<dbReference type="PRINTS" id="PR00124">
    <property type="entry name" value="ATPASEC"/>
</dbReference>
<dbReference type="SUPFAM" id="SSF81333">
    <property type="entry name" value="F1F0 ATP synthase subunit C"/>
    <property type="match status" value="1"/>
</dbReference>
<dbReference type="PROSITE" id="PS00605">
    <property type="entry name" value="ATPASE_C"/>
    <property type="match status" value="1"/>
</dbReference>